<reference key="1">
    <citation type="journal article" date="2007" name="Nat. Biotechnol.">
        <title>Genome sequence of the lignocellulose-bioconverting and xylose-fermenting yeast Pichia stipitis.</title>
        <authorList>
            <person name="Jeffries T.W."/>
            <person name="Grigoriev I.V."/>
            <person name="Grimwood J."/>
            <person name="Laplaza J.M."/>
            <person name="Aerts A."/>
            <person name="Salamov A."/>
            <person name="Schmutz J."/>
            <person name="Lindquist E."/>
            <person name="Dehal P."/>
            <person name="Shapiro H."/>
            <person name="Jin Y.-S."/>
            <person name="Passoth V."/>
            <person name="Richardson P.M."/>
        </authorList>
    </citation>
    <scope>NUCLEOTIDE SEQUENCE [LARGE SCALE GENOMIC DNA]</scope>
    <source>
        <strain>ATCC 58785 / CBS 6054 / NBRC 10063 / NRRL Y-11545</strain>
    </source>
</reference>
<sequence length="604" mass="69132">MAKIKKRGVSGNAKNFITRTQAVKKLQVSLSDFRRLCIFKGIYPREPRNKKKANKGSTAPVTFYYAKDIQYLSHEPVLAKFREHKTFAKKLQRALGRGEVSDAQKLEANRPKYTLEHIIKERYPTFLDALRDIDDPLNMLFLFANMPATDKVSHRVTKEAEKLTNQWLAYVAKERLIKKVFVSIKGVYYQANVKGQEIRWLVPFKFPTNIPTDVDFRIMLTFLEFYSTLLHFVLYRLYNDSNLIYPPTIDIEKLKGIGGLSSYVLQSKDQGVSALLPQDKKIVEDDVSVQGKELSTANISKALEADNEGEEHEEVEQETVENVELDKFEASATKTAVDSLVQPSKYASPTSTLFSKFIFYVGREVPLDILELCILSCGGSVVSEVALDDLKTNSPDAYKKLDLSNITHQIIDRPKILQKVAGRTYIQPQWIFDCINKSELLPVNKYAPGETLPPHLSPWGDAGSYNPEAEKVDQSENAEEEEEDEVDEDDEDADEDEEDEEEEDEEEDEDLKAQKELELEAAGVKFSEIAEKEKKAAKKASKKRPAEEDEEKELKKIMMTNKQRKLYKKMQYGIDKKETRTQELAKKKRKIEKTKAQLDKLSKK</sequence>
<comment type="function">
    <text evidence="1">Component of the NOP7 complex, which is required for maturation of the 25S and 5.8S ribosomal RNAs and formation of the 60S ribosome.</text>
</comment>
<comment type="subunit">
    <text evidence="1">Component of the NOP7 complex, composed of ERB1, NOP7 and YTM1. The complex is held together by ERB1, which interacts with NOP7 via its N-terminal domain and with YTM1 via a high-affinity interaction between the seven-bladed beta-propeller domains of the 2 proteins. The NOP7 complex associates with the 66S pre-ribosome.</text>
</comment>
<comment type="subcellular location">
    <subcellularLocation>
        <location evidence="1">Nucleus</location>
        <location evidence="1">Nucleolus</location>
    </subcellularLocation>
    <subcellularLocation>
        <location evidence="1">Nucleus</location>
        <location evidence="1">Nucleoplasm</location>
    </subcellularLocation>
</comment>
<comment type="similarity">
    <text evidence="1">Belongs to the pescadillo family.</text>
</comment>
<protein>
    <recommendedName>
        <fullName evidence="1">Pescadillo homolog</fullName>
    </recommendedName>
    <alternativeName>
        <fullName evidence="1">Nucleolar protein 7 homolog</fullName>
    </alternativeName>
</protein>
<organism>
    <name type="scientific">Scheffersomyces stipitis (strain ATCC 58785 / CBS 6054 / NBRC 10063 / NRRL Y-11545)</name>
    <name type="common">Yeast</name>
    <name type="synonym">Pichia stipitis</name>
    <dbReference type="NCBI Taxonomy" id="322104"/>
    <lineage>
        <taxon>Eukaryota</taxon>
        <taxon>Fungi</taxon>
        <taxon>Dikarya</taxon>
        <taxon>Ascomycota</taxon>
        <taxon>Saccharomycotina</taxon>
        <taxon>Pichiomycetes</taxon>
        <taxon>Debaryomycetaceae</taxon>
        <taxon>Scheffersomyces</taxon>
    </lineage>
</organism>
<name>PESC_PICST</name>
<proteinExistence type="inferred from homology"/>
<evidence type="ECO:0000255" key="1">
    <source>
        <dbReference type="HAMAP-Rule" id="MF_03028"/>
    </source>
</evidence>
<evidence type="ECO:0000256" key="2">
    <source>
        <dbReference type="SAM" id="MobiDB-lite"/>
    </source>
</evidence>
<dbReference type="EMBL" id="CP000498">
    <property type="protein sequence ID" value="ABN66528.2"/>
    <property type="molecule type" value="Genomic_DNA"/>
</dbReference>
<dbReference type="RefSeq" id="XP_001384557.2">
    <property type="nucleotide sequence ID" value="XM_001384520.1"/>
</dbReference>
<dbReference type="SMR" id="A3LU56"/>
<dbReference type="FunCoup" id="A3LU56">
    <property type="interactions" value="1379"/>
</dbReference>
<dbReference type="STRING" id="322104.A3LU56"/>
<dbReference type="GeneID" id="4839029"/>
<dbReference type="KEGG" id="pic:PICST_71704"/>
<dbReference type="eggNOG" id="KOG2481">
    <property type="taxonomic scope" value="Eukaryota"/>
</dbReference>
<dbReference type="HOGENOM" id="CLU_019619_1_1_1"/>
<dbReference type="InParanoid" id="A3LU56"/>
<dbReference type="OMA" id="QKVTWIV"/>
<dbReference type="OrthoDB" id="10264910at2759"/>
<dbReference type="Proteomes" id="UP000002258">
    <property type="component" value="Chromosome 4"/>
</dbReference>
<dbReference type="GO" id="GO:0005654">
    <property type="term" value="C:nucleoplasm"/>
    <property type="evidence" value="ECO:0007669"/>
    <property type="project" value="UniProtKB-SubCell"/>
</dbReference>
<dbReference type="GO" id="GO:0070545">
    <property type="term" value="C:PeBoW complex"/>
    <property type="evidence" value="ECO:0007669"/>
    <property type="project" value="EnsemblFungi"/>
</dbReference>
<dbReference type="GO" id="GO:0030687">
    <property type="term" value="C:preribosome, large subunit precursor"/>
    <property type="evidence" value="ECO:0007669"/>
    <property type="project" value="UniProtKB-UniRule"/>
</dbReference>
<dbReference type="GO" id="GO:0070180">
    <property type="term" value="F:large ribosomal subunit rRNA binding"/>
    <property type="evidence" value="ECO:0007669"/>
    <property type="project" value="EnsemblFungi"/>
</dbReference>
<dbReference type="GO" id="GO:0043021">
    <property type="term" value="F:ribonucleoprotein complex binding"/>
    <property type="evidence" value="ECO:0007669"/>
    <property type="project" value="UniProtKB-UniRule"/>
</dbReference>
<dbReference type="GO" id="GO:0000466">
    <property type="term" value="P:maturation of 5.8S rRNA from tricistronic rRNA transcript (SSU-rRNA, 5.8S rRNA, LSU-rRNA)"/>
    <property type="evidence" value="ECO:0007669"/>
    <property type="project" value="UniProtKB-UniRule"/>
</dbReference>
<dbReference type="GO" id="GO:0000463">
    <property type="term" value="P:maturation of LSU-rRNA from tricistronic rRNA transcript (SSU-rRNA, 5.8S rRNA, LSU-rRNA)"/>
    <property type="evidence" value="ECO:0007669"/>
    <property type="project" value="UniProtKB-UniRule"/>
</dbReference>
<dbReference type="GO" id="GO:0000462">
    <property type="term" value="P:maturation of SSU-rRNA from tricistronic rRNA transcript (SSU-rRNA, 5.8S rRNA, LSU-rRNA)"/>
    <property type="evidence" value="ECO:0007669"/>
    <property type="project" value="EnsemblFungi"/>
</dbReference>
<dbReference type="CDD" id="cd17709">
    <property type="entry name" value="BRCT_pescadillo_like"/>
    <property type="match status" value="1"/>
</dbReference>
<dbReference type="FunFam" id="3.40.50.10190:FF:000067">
    <property type="entry name" value="Pescadillo homolog"/>
    <property type="match status" value="1"/>
</dbReference>
<dbReference type="Gene3D" id="3.40.50.10190">
    <property type="entry name" value="BRCT domain"/>
    <property type="match status" value="1"/>
</dbReference>
<dbReference type="HAMAP" id="MF_03028">
    <property type="entry name" value="Pescadillo"/>
    <property type="match status" value="1"/>
</dbReference>
<dbReference type="InterPro" id="IPR001357">
    <property type="entry name" value="BRCT_dom"/>
</dbReference>
<dbReference type="InterPro" id="IPR036420">
    <property type="entry name" value="BRCT_dom_sf"/>
</dbReference>
<dbReference type="InterPro" id="IPR010613">
    <property type="entry name" value="PES"/>
</dbReference>
<dbReference type="PANTHER" id="PTHR12221">
    <property type="entry name" value="PESCADILLO - RELATED"/>
    <property type="match status" value="1"/>
</dbReference>
<dbReference type="PANTHER" id="PTHR12221:SF6">
    <property type="entry name" value="PESCADILLO HOMOLOG"/>
    <property type="match status" value="1"/>
</dbReference>
<dbReference type="Pfam" id="PF16589">
    <property type="entry name" value="BRCT_2"/>
    <property type="match status" value="1"/>
</dbReference>
<dbReference type="Pfam" id="PF06732">
    <property type="entry name" value="Pescadillo_N"/>
    <property type="match status" value="1"/>
</dbReference>
<dbReference type="SMART" id="SM00292">
    <property type="entry name" value="BRCT"/>
    <property type="match status" value="1"/>
</dbReference>
<dbReference type="SUPFAM" id="SSF52113">
    <property type="entry name" value="BRCT domain"/>
    <property type="match status" value="1"/>
</dbReference>
<dbReference type="PROSITE" id="PS50172">
    <property type="entry name" value="BRCT"/>
    <property type="match status" value="1"/>
</dbReference>
<gene>
    <name evidence="1" type="primary">NOP7</name>
    <name type="ORF">PICST_71704</name>
</gene>
<feature type="chain" id="PRO_0000370501" description="Pescadillo homolog">
    <location>
        <begin position="1"/>
        <end position="604"/>
    </location>
</feature>
<feature type="domain" description="BRCT" evidence="1">
    <location>
        <begin position="349"/>
        <end position="448"/>
    </location>
</feature>
<feature type="region of interest" description="Disordered" evidence="2">
    <location>
        <begin position="452"/>
        <end position="562"/>
    </location>
</feature>
<feature type="region of interest" description="Disordered" evidence="2">
    <location>
        <begin position="579"/>
        <end position="604"/>
    </location>
</feature>
<feature type="coiled-coil region" evidence="1">
    <location>
        <begin position="468"/>
        <end position="522"/>
    </location>
</feature>
<feature type="coiled-coil region" evidence="1">
    <location>
        <begin position="573"/>
        <end position="604"/>
    </location>
</feature>
<feature type="compositionally biased region" description="Acidic residues" evidence="2">
    <location>
        <begin position="476"/>
        <end position="510"/>
    </location>
</feature>
<feature type="compositionally biased region" description="Basic and acidic residues" evidence="2">
    <location>
        <begin position="593"/>
        <end position="604"/>
    </location>
</feature>
<keyword id="KW-0175">Coiled coil</keyword>
<keyword id="KW-0539">Nucleus</keyword>
<keyword id="KW-1185">Reference proteome</keyword>
<keyword id="KW-0690">Ribosome biogenesis</keyword>
<keyword id="KW-0698">rRNA processing</keyword>
<accession>A3LU56</accession>